<accession>Q748A8</accession>
<sequence>MKEGIHPKYNDVMVKCACGNSFQTRSTKTEISTEICSACHPFFTGKQKLIDTAGRVERFRKKYGM</sequence>
<dbReference type="EMBL" id="AE017180">
    <property type="protein sequence ID" value="AAR36498.1"/>
    <property type="molecule type" value="Genomic_DNA"/>
</dbReference>
<dbReference type="RefSeq" id="NP_954148.1">
    <property type="nucleotide sequence ID" value="NC_002939.5"/>
</dbReference>
<dbReference type="RefSeq" id="WP_010943728.1">
    <property type="nucleotide sequence ID" value="NC_002939.5"/>
</dbReference>
<dbReference type="SMR" id="Q748A8"/>
<dbReference type="FunCoup" id="Q748A8">
    <property type="interactions" value="471"/>
</dbReference>
<dbReference type="STRING" id="243231.GSU3107"/>
<dbReference type="EnsemblBacteria" id="AAR36498">
    <property type="protein sequence ID" value="AAR36498"/>
    <property type="gene ID" value="GSU3107"/>
</dbReference>
<dbReference type="KEGG" id="gsu:GSU3107"/>
<dbReference type="PATRIC" id="fig|243231.5.peg.3131"/>
<dbReference type="eggNOG" id="COG0254">
    <property type="taxonomic scope" value="Bacteria"/>
</dbReference>
<dbReference type="HOGENOM" id="CLU_114306_4_3_7"/>
<dbReference type="InParanoid" id="Q748A8"/>
<dbReference type="OrthoDB" id="9803251at2"/>
<dbReference type="Proteomes" id="UP000000577">
    <property type="component" value="Chromosome"/>
</dbReference>
<dbReference type="GO" id="GO:1990904">
    <property type="term" value="C:ribonucleoprotein complex"/>
    <property type="evidence" value="ECO:0007669"/>
    <property type="project" value="UniProtKB-KW"/>
</dbReference>
<dbReference type="GO" id="GO:0005840">
    <property type="term" value="C:ribosome"/>
    <property type="evidence" value="ECO:0007669"/>
    <property type="project" value="UniProtKB-KW"/>
</dbReference>
<dbReference type="GO" id="GO:0046872">
    <property type="term" value="F:metal ion binding"/>
    <property type="evidence" value="ECO:0007669"/>
    <property type="project" value="UniProtKB-KW"/>
</dbReference>
<dbReference type="GO" id="GO:0019843">
    <property type="term" value="F:rRNA binding"/>
    <property type="evidence" value="ECO:0007669"/>
    <property type="project" value="UniProtKB-KW"/>
</dbReference>
<dbReference type="GO" id="GO:0003735">
    <property type="term" value="F:structural constituent of ribosome"/>
    <property type="evidence" value="ECO:0007669"/>
    <property type="project" value="InterPro"/>
</dbReference>
<dbReference type="GO" id="GO:0006412">
    <property type="term" value="P:translation"/>
    <property type="evidence" value="ECO:0007669"/>
    <property type="project" value="UniProtKB-UniRule"/>
</dbReference>
<dbReference type="Gene3D" id="4.10.830.30">
    <property type="entry name" value="Ribosomal protein L31"/>
    <property type="match status" value="1"/>
</dbReference>
<dbReference type="HAMAP" id="MF_00501">
    <property type="entry name" value="Ribosomal_bL31_1"/>
    <property type="match status" value="1"/>
</dbReference>
<dbReference type="InterPro" id="IPR034704">
    <property type="entry name" value="Ribosomal_bL28/bL31-like_sf"/>
</dbReference>
<dbReference type="InterPro" id="IPR002150">
    <property type="entry name" value="Ribosomal_bL31"/>
</dbReference>
<dbReference type="InterPro" id="IPR027491">
    <property type="entry name" value="Ribosomal_bL31_A"/>
</dbReference>
<dbReference type="InterPro" id="IPR042105">
    <property type="entry name" value="Ribosomal_bL31_sf"/>
</dbReference>
<dbReference type="NCBIfam" id="TIGR00105">
    <property type="entry name" value="L31"/>
    <property type="match status" value="1"/>
</dbReference>
<dbReference type="NCBIfam" id="NF000612">
    <property type="entry name" value="PRK00019.1"/>
    <property type="match status" value="1"/>
</dbReference>
<dbReference type="NCBIfam" id="NF001809">
    <property type="entry name" value="PRK00528.1"/>
    <property type="match status" value="1"/>
</dbReference>
<dbReference type="PANTHER" id="PTHR33280">
    <property type="entry name" value="50S RIBOSOMAL PROTEIN L31, CHLOROPLASTIC"/>
    <property type="match status" value="1"/>
</dbReference>
<dbReference type="PANTHER" id="PTHR33280:SF6">
    <property type="entry name" value="LARGE RIBOSOMAL SUBUNIT PROTEIN BL31A"/>
    <property type="match status" value="1"/>
</dbReference>
<dbReference type="Pfam" id="PF01197">
    <property type="entry name" value="Ribosomal_L31"/>
    <property type="match status" value="1"/>
</dbReference>
<dbReference type="PRINTS" id="PR01249">
    <property type="entry name" value="RIBOSOMALL31"/>
</dbReference>
<dbReference type="SUPFAM" id="SSF143800">
    <property type="entry name" value="L28p-like"/>
    <property type="match status" value="1"/>
</dbReference>
<dbReference type="PROSITE" id="PS01143">
    <property type="entry name" value="RIBOSOMAL_L31"/>
    <property type="match status" value="1"/>
</dbReference>
<protein>
    <recommendedName>
        <fullName evidence="1">Large ribosomal subunit protein bL31</fullName>
    </recommendedName>
    <alternativeName>
        <fullName evidence="2">50S ribosomal protein L31</fullName>
    </alternativeName>
</protein>
<gene>
    <name evidence="1" type="primary">rpmE</name>
    <name type="ordered locus">GSU3107</name>
</gene>
<organism>
    <name type="scientific">Geobacter sulfurreducens (strain ATCC 51573 / DSM 12127 / PCA)</name>
    <dbReference type="NCBI Taxonomy" id="243231"/>
    <lineage>
        <taxon>Bacteria</taxon>
        <taxon>Pseudomonadati</taxon>
        <taxon>Thermodesulfobacteriota</taxon>
        <taxon>Desulfuromonadia</taxon>
        <taxon>Geobacterales</taxon>
        <taxon>Geobacteraceae</taxon>
        <taxon>Geobacter</taxon>
    </lineage>
</organism>
<feature type="chain" id="PRO_0000173109" description="Large ribosomal subunit protein bL31">
    <location>
        <begin position="1"/>
        <end position="65"/>
    </location>
</feature>
<feature type="binding site" evidence="1">
    <location>
        <position position="16"/>
    </location>
    <ligand>
        <name>Zn(2+)</name>
        <dbReference type="ChEBI" id="CHEBI:29105"/>
    </ligand>
</feature>
<feature type="binding site" evidence="1">
    <location>
        <position position="18"/>
    </location>
    <ligand>
        <name>Zn(2+)</name>
        <dbReference type="ChEBI" id="CHEBI:29105"/>
    </ligand>
</feature>
<feature type="binding site" evidence="1">
    <location>
        <position position="36"/>
    </location>
    <ligand>
        <name>Zn(2+)</name>
        <dbReference type="ChEBI" id="CHEBI:29105"/>
    </ligand>
</feature>
<feature type="binding site" evidence="1">
    <location>
        <position position="39"/>
    </location>
    <ligand>
        <name>Zn(2+)</name>
        <dbReference type="ChEBI" id="CHEBI:29105"/>
    </ligand>
</feature>
<reference key="1">
    <citation type="journal article" date="2003" name="Science">
        <title>Genome of Geobacter sulfurreducens: metal reduction in subsurface environments.</title>
        <authorList>
            <person name="Methe B.A."/>
            <person name="Nelson K.E."/>
            <person name="Eisen J.A."/>
            <person name="Paulsen I.T."/>
            <person name="Nelson W.C."/>
            <person name="Heidelberg J.F."/>
            <person name="Wu D."/>
            <person name="Wu M."/>
            <person name="Ward N.L."/>
            <person name="Beanan M.J."/>
            <person name="Dodson R.J."/>
            <person name="Madupu R."/>
            <person name="Brinkac L.M."/>
            <person name="Daugherty S.C."/>
            <person name="DeBoy R.T."/>
            <person name="Durkin A.S."/>
            <person name="Gwinn M.L."/>
            <person name="Kolonay J.F."/>
            <person name="Sullivan S.A."/>
            <person name="Haft D.H."/>
            <person name="Selengut J."/>
            <person name="Davidsen T.M."/>
            <person name="Zafar N."/>
            <person name="White O."/>
            <person name="Tran B."/>
            <person name="Romero C."/>
            <person name="Forberger H.A."/>
            <person name="Weidman J.F."/>
            <person name="Khouri H.M."/>
            <person name="Feldblyum T.V."/>
            <person name="Utterback T.R."/>
            <person name="Van Aken S.E."/>
            <person name="Lovley D.R."/>
            <person name="Fraser C.M."/>
        </authorList>
    </citation>
    <scope>NUCLEOTIDE SEQUENCE [LARGE SCALE GENOMIC DNA]</scope>
    <source>
        <strain>ATCC 51573 / DSM 12127 / PCA</strain>
    </source>
</reference>
<comment type="function">
    <text evidence="1">Binds the 23S rRNA.</text>
</comment>
<comment type="cofactor">
    <cofactor evidence="1">
        <name>Zn(2+)</name>
        <dbReference type="ChEBI" id="CHEBI:29105"/>
    </cofactor>
    <text evidence="1">Binds 1 zinc ion per subunit.</text>
</comment>
<comment type="subunit">
    <text evidence="1">Part of the 50S ribosomal subunit.</text>
</comment>
<comment type="similarity">
    <text evidence="1">Belongs to the bacterial ribosomal protein bL31 family. Type A subfamily.</text>
</comment>
<name>RL31_GEOSL</name>
<keyword id="KW-0479">Metal-binding</keyword>
<keyword id="KW-1185">Reference proteome</keyword>
<keyword id="KW-0687">Ribonucleoprotein</keyword>
<keyword id="KW-0689">Ribosomal protein</keyword>
<keyword id="KW-0694">RNA-binding</keyword>
<keyword id="KW-0699">rRNA-binding</keyword>
<keyword id="KW-0862">Zinc</keyword>
<evidence type="ECO:0000255" key="1">
    <source>
        <dbReference type="HAMAP-Rule" id="MF_00501"/>
    </source>
</evidence>
<evidence type="ECO:0000305" key="2"/>
<proteinExistence type="inferred from homology"/>